<sequence>MRKIIHVDMDCFFAAVEMRDNPALRDIPIAIGGSRERRGVISTANYPARKFGVRSAMPTGMALKLCPHLTLLPGRFDAYKEASNHIREIFSRYTSRIEPLSLDEAYLDVTDSVHCHGSATLIAQEIRQTIFNELQLTASAGVAPVKFLAKIASDMNKPNGQFVITPAEVPAFLQTLPLAKIPGVGKVSAAKLEAMGLRTCGDVQKCDLVTLLKRFGKFGRILWERSQGIDERDVNSERLRKSVGVERTMAEDIHHWSECEAIIERLYPELERRLAKVKPDLLIARQGVKLKFDDFQQTTQEHVWPRLNKSDLIATARKTWDERRGGRGVRLVGLHVTLLDPQMERQLVLGL</sequence>
<keyword id="KW-0963">Cytoplasm</keyword>
<keyword id="KW-0227">DNA damage</keyword>
<keyword id="KW-0234">DNA repair</keyword>
<keyword id="KW-0235">DNA replication</keyword>
<keyword id="KW-0238">DNA-binding</keyword>
<keyword id="KW-0239">DNA-directed DNA polymerase</keyword>
<keyword id="KW-0460">Magnesium</keyword>
<keyword id="KW-0479">Metal-binding</keyword>
<keyword id="KW-0515">Mutator protein</keyword>
<keyword id="KW-0548">Nucleotidyltransferase</keyword>
<keyword id="KW-0808">Transferase</keyword>
<name>DPO4_ECOUT</name>
<gene>
    <name evidence="1" type="primary">dinB</name>
    <name type="ordered locus">UTI89_C0271</name>
</gene>
<comment type="function">
    <text evidence="1">Poorly processive, error-prone DNA polymerase involved in untargeted mutagenesis. Copies undamaged DNA at stalled replication forks, which arise in vivo from mismatched or misaligned primer ends. These misaligned primers can be extended by PolIV. Exhibits no 3'-5' exonuclease (proofreading) activity. May be involved in translesional synthesis, in conjunction with the beta clamp from PolIII.</text>
</comment>
<comment type="catalytic activity">
    <reaction evidence="1">
        <text>DNA(n) + a 2'-deoxyribonucleoside 5'-triphosphate = DNA(n+1) + diphosphate</text>
        <dbReference type="Rhea" id="RHEA:22508"/>
        <dbReference type="Rhea" id="RHEA-COMP:17339"/>
        <dbReference type="Rhea" id="RHEA-COMP:17340"/>
        <dbReference type="ChEBI" id="CHEBI:33019"/>
        <dbReference type="ChEBI" id="CHEBI:61560"/>
        <dbReference type="ChEBI" id="CHEBI:173112"/>
        <dbReference type="EC" id="2.7.7.7"/>
    </reaction>
</comment>
<comment type="cofactor">
    <cofactor evidence="1">
        <name>Mg(2+)</name>
        <dbReference type="ChEBI" id="CHEBI:18420"/>
    </cofactor>
    <text evidence="1">Binds 2 magnesium ions per subunit.</text>
</comment>
<comment type="subunit">
    <text evidence="1">Monomer.</text>
</comment>
<comment type="subcellular location">
    <subcellularLocation>
        <location evidence="1">Cytoplasm</location>
    </subcellularLocation>
</comment>
<comment type="similarity">
    <text evidence="1">Belongs to the DNA polymerase type-Y family.</text>
</comment>
<protein>
    <recommendedName>
        <fullName evidence="1">DNA polymerase IV</fullName>
        <shortName evidence="1">Pol IV</shortName>
        <ecNumber evidence="1">2.7.7.7</ecNumber>
    </recommendedName>
</protein>
<accession>Q1RFU0</accession>
<evidence type="ECO:0000255" key="1">
    <source>
        <dbReference type="HAMAP-Rule" id="MF_01113"/>
    </source>
</evidence>
<dbReference type="EC" id="2.7.7.7" evidence="1"/>
<dbReference type="EMBL" id="CP000243">
    <property type="protein sequence ID" value="ABE05774.1"/>
    <property type="molecule type" value="Genomic_DNA"/>
</dbReference>
<dbReference type="RefSeq" id="WP_001226168.1">
    <property type="nucleotide sequence ID" value="NZ_CP064825.1"/>
</dbReference>
<dbReference type="SMR" id="Q1RFU0"/>
<dbReference type="KEGG" id="eci:UTI89_C0271"/>
<dbReference type="HOGENOM" id="CLU_012348_1_2_6"/>
<dbReference type="Proteomes" id="UP000001952">
    <property type="component" value="Chromosome"/>
</dbReference>
<dbReference type="GO" id="GO:0005829">
    <property type="term" value="C:cytosol"/>
    <property type="evidence" value="ECO:0007669"/>
    <property type="project" value="TreeGrafter"/>
</dbReference>
<dbReference type="GO" id="GO:0003684">
    <property type="term" value="F:damaged DNA binding"/>
    <property type="evidence" value="ECO:0007669"/>
    <property type="project" value="InterPro"/>
</dbReference>
<dbReference type="GO" id="GO:0003887">
    <property type="term" value="F:DNA-directed DNA polymerase activity"/>
    <property type="evidence" value="ECO:0007669"/>
    <property type="project" value="UniProtKB-UniRule"/>
</dbReference>
<dbReference type="GO" id="GO:0000287">
    <property type="term" value="F:magnesium ion binding"/>
    <property type="evidence" value="ECO:0007669"/>
    <property type="project" value="UniProtKB-UniRule"/>
</dbReference>
<dbReference type="GO" id="GO:0006261">
    <property type="term" value="P:DNA-templated DNA replication"/>
    <property type="evidence" value="ECO:0007669"/>
    <property type="project" value="UniProtKB-UniRule"/>
</dbReference>
<dbReference type="GO" id="GO:0042276">
    <property type="term" value="P:error-prone translesion synthesis"/>
    <property type="evidence" value="ECO:0007669"/>
    <property type="project" value="TreeGrafter"/>
</dbReference>
<dbReference type="GO" id="GO:0009432">
    <property type="term" value="P:SOS response"/>
    <property type="evidence" value="ECO:0007669"/>
    <property type="project" value="TreeGrafter"/>
</dbReference>
<dbReference type="CDD" id="cd03586">
    <property type="entry name" value="PolY_Pol_IV_kappa"/>
    <property type="match status" value="1"/>
</dbReference>
<dbReference type="FunFam" id="1.10.150.20:FF:000019">
    <property type="entry name" value="DNA polymerase IV"/>
    <property type="match status" value="1"/>
</dbReference>
<dbReference type="FunFam" id="3.30.1490.100:FF:000002">
    <property type="entry name" value="DNA polymerase IV"/>
    <property type="match status" value="1"/>
</dbReference>
<dbReference type="FunFam" id="3.30.70.270:FF:000002">
    <property type="entry name" value="DNA polymerase IV"/>
    <property type="match status" value="1"/>
</dbReference>
<dbReference type="FunFam" id="3.40.1170.60:FF:000001">
    <property type="entry name" value="DNA polymerase IV"/>
    <property type="match status" value="1"/>
</dbReference>
<dbReference type="Gene3D" id="3.30.70.270">
    <property type="match status" value="1"/>
</dbReference>
<dbReference type="Gene3D" id="3.40.1170.60">
    <property type="match status" value="1"/>
</dbReference>
<dbReference type="Gene3D" id="1.10.150.20">
    <property type="entry name" value="5' to 3' exonuclease, C-terminal subdomain"/>
    <property type="match status" value="1"/>
</dbReference>
<dbReference type="Gene3D" id="3.30.1490.100">
    <property type="entry name" value="DNA polymerase, Y-family, little finger domain"/>
    <property type="match status" value="1"/>
</dbReference>
<dbReference type="HAMAP" id="MF_01113">
    <property type="entry name" value="DNApol_IV"/>
    <property type="match status" value="1"/>
</dbReference>
<dbReference type="InterPro" id="IPR043502">
    <property type="entry name" value="DNA/RNA_pol_sf"/>
</dbReference>
<dbReference type="InterPro" id="IPR036775">
    <property type="entry name" value="DNA_pol_Y-fam_lit_finger_sf"/>
</dbReference>
<dbReference type="InterPro" id="IPR017961">
    <property type="entry name" value="DNA_pol_Y-fam_little_finger"/>
</dbReference>
<dbReference type="InterPro" id="IPR050116">
    <property type="entry name" value="DNA_polymerase-Y"/>
</dbReference>
<dbReference type="InterPro" id="IPR022880">
    <property type="entry name" value="DNApol_IV"/>
</dbReference>
<dbReference type="InterPro" id="IPR053848">
    <property type="entry name" value="IMS_HHH_1"/>
</dbReference>
<dbReference type="InterPro" id="IPR043128">
    <property type="entry name" value="Rev_trsase/Diguanyl_cyclase"/>
</dbReference>
<dbReference type="InterPro" id="IPR001126">
    <property type="entry name" value="UmuC"/>
</dbReference>
<dbReference type="NCBIfam" id="NF002677">
    <property type="entry name" value="PRK02406.1"/>
    <property type="match status" value="1"/>
</dbReference>
<dbReference type="PANTHER" id="PTHR11076:SF33">
    <property type="entry name" value="DNA POLYMERASE KAPPA"/>
    <property type="match status" value="1"/>
</dbReference>
<dbReference type="PANTHER" id="PTHR11076">
    <property type="entry name" value="DNA REPAIR POLYMERASE UMUC / TRANSFERASE FAMILY MEMBER"/>
    <property type="match status" value="1"/>
</dbReference>
<dbReference type="Pfam" id="PF00817">
    <property type="entry name" value="IMS"/>
    <property type="match status" value="1"/>
</dbReference>
<dbReference type="Pfam" id="PF11799">
    <property type="entry name" value="IMS_C"/>
    <property type="match status" value="1"/>
</dbReference>
<dbReference type="Pfam" id="PF21999">
    <property type="entry name" value="IMS_HHH_1"/>
    <property type="match status" value="1"/>
</dbReference>
<dbReference type="SUPFAM" id="SSF56672">
    <property type="entry name" value="DNA/RNA polymerases"/>
    <property type="match status" value="1"/>
</dbReference>
<dbReference type="SUPFAM" id="SSF100879">
    <property type="entry name" value="Lesion bypass DNA polymerase (Y-family), little finger domain"/>
    <property type="match status" value="1"/>
</dbReference>
<dbReference type="PROSITE" id="PS50173">
    <property type="entry name" value="UMUC"/>
    <property type="match status" value="1"/>
</dbReference>
<reference key="1">
    <citation type="journal article" date="2006" name="Proc. Natl. Acad. Sci. U.S.A.">
        <title>Identification of genes subject to positive selection in uropathogenic strains of Escherichia coli: a comparative genomics approach.</title>
        <authorList>
            <person name="Chen S.L."/>
            <person name="Hung C.-S."/>
            <person name="Xu J."/>
            <person name="Reigstad C.S."/>
            <person name="Magrini V."/>
            <person name="Sabo A."/>
            <person name="Blasiar D."/>
            <person name="Bieri T."/>
            <person name="Meyer R.R."/>
            <person name="Ozersky P."/>
            <person name="Armstrong J.R."/>
            <person name="Fulton R.S."/>
            <person name="Latreille J.P."/>
            <person name="Spieth J."/>
            <person name="Hooton T.M."/>
            <person name="Mardis E.R."/>
            <person name="Hultgren S.J."/>
            <person name="Gordon J.I."/>
        </authorList>
    </citation>
    <scope>NUCLEOTIDE SEQUENCE [LARGE SCALE GENOMIC DNA]</scope>
    <source>
        <strain>UTI89 / UPEC</strain>
    </source>
</reference>
<feature type="chain" id="PRO_1000084893" description="DNA polymerase IV">
    <location>
        <begin position="1"/>
        <end position="351"/>
    </location>
</feature>
<feature type="domain" description="UmuC" evidence="1">
    <location>
        <begin position="4"/>
        <end position="185"/>
    </location>
</feature>
<feature type="active site" evidence="1">
    <location>
        <position position="104"/>
    </location>
</feature>
<feature type="binding site" evidence="1">
    <location>
        <position position="8"/>
    </location>
    <ligand>
        <name>Mg(2+)</name>
        <dbReference type="ChEBI" id="CHEBI:18420"/>
    </ligand>
</feature>
<feature type="binding site" evidence="1">
    <location>
        <position position="103"/>
    </location>
    <ligand>
        <name>Mg(2+)</name>
        <dbReference type="ChEBI" id="CHEBI:18420"/>
    </ligand>
</feature>
<feature type="site" description="Substrate discrimination" evidence="1">
    <location>
        <position position="13"/>
    </location>
</feature>
<organism>
    <name type="scientific">Escherichia coli (strain UTI89 / UPEC)</name>
    <dbReference type="NCBI Taxonomy" id="364106"/>
    <lineage>
        <taxon>Bacteria</taxon>
        <taxon>Pseudomonadati</taxon>
        <taxon>Pseudomonadota</taxon>
        <taxon>Gammaproteobacteria</taxon>
        <taxon>Enterobacterales</taxon>
        <taxon>Enterobacteriaceae</taxon>
        <taxon>Escherichia</taxon>
    </lineage>
</organism>
<proteinExistence type="inferred from homology"/>